<reference key="1">
    <citation type="journal article" date="2006" name="Nature">
        <title>DNA sequence of human chromosome 17 and analysis of rearrangement in the human lineage.</title>
        <authorList>
            <person name="Zody M.C."/>
            <person name="Garber M."/>
            <person name="Adams D.J."/>
            <person name="Sharpe T."/>
            <person name="Harrow J."/>
            <person name="Lupski J.R."/>
            <person name="Nicholson C."/>
            <person name="Searle S.M."/>
            <person name="Wilming L."/>
            <person name="Young S.K."/>
            <person name="Abouelleil A."/>
            <person name="Allen N.R."/>
            <person name="Bi W."/>
            <person name="Bloom T."/>
            <person name="Borowsky M.L."/>
            <person name="Bugalter B.E."/>
            <person name="Butler J."/>
            <person name="Chang J.L."/>
            <person name="Chen C.-K."/>
            <person name="Cook A."/>
            <person name="Corum B."/>
            <person name="Cuomo C.A."/>
            <person name="de Jong P.J."/>
            <person name="DeCaprio D."/>
            <person name="Dewar K."/>
            <person name="FitzGerald M."/>
            <person name="Gilbert J."/>
            <person name="Gibson R."/>
            <person name="Gnerre S."/>
            <person name="Goldstein S."/>
            <person name="Grafham D.V."/>
            <person name="Grocock R."/>
            <person name="Hafez N."/>
            <person name="Hagopian D.S."/>
            <person name="Hart E."/>
            <person name="Norman C.H."/>
            <person name="Humphray S."/>
            <person name="Jaffe D.B."/>
            <person name="Jones M."/>
            <person name="Kamal M."/>
            <person name="Khodiyar V.K."/>
            <person name="LaButti K."/>
            <person name="Laird G."/>
            <person name="Lehoczky J."/>
            <person name="Liu X."/>
            <person name="Lokyitsang T."/>
            <person name="Loveland J."/>
            <person name="Lui A."/>
            <person name="Macdonald P."/>
            <person name="Major J.E."/>
            <person name="Matthews L."/>
            <person name="Mauceli E."/>
            <person name="McCarroll S.A."/>
            <person name="Mihalev A.H."/>
            <person name="Mudge J."/>
            <person name="Nguyen C."/>
            <person name="Nicol R."/>
            <person name="O'Leary S.B."/>
            <person name="Osoegawa K."/>
            <person name="Schwartz D.C."/>
            <person name="Shaw-Smith C."/>
            <person name="Stankiewicz P."/>
            <person name="Steward C."/>
            <person name="Swarbreck D."/>
            <person name="Venkataraman V."/>
            <person name="Whittaker C.A."/>
            <person name="Yang X."/>
            <person name="Zimmer A.R."/>
            <person name="Bradley A."/>
            <person name="Hubbard T."/>
            <person name="Birren B.W."/>
            <person name="Rogers J."/>
            <person name="Lander E.S."/>
            <person name="Nusbaum C."/>
        </authorList>
    </citation>
    <scope>NUCLEOTIDE SEQUENCE [LARGE SCALE GENOMIC DNA]</scope>
</reference>
<evidence type="ECO:0000255" key="1"/>
<evidence type="ECO:0000256" key="2">
    <source>
        <dbReference type="SAM" id="MobiDB-lite"/>
    </source>
</evidence>
<evidence type="ECO:0000305" key="3"/>
<evidence type="ECO:0000312" key="4">
    <source>
        <dbReference type="HGNC" id="HGNC:52279"/>
    </source>
</evidence>
<organism>
    <name type="scientific">Homo sapiens</name>
    <name type="common">Human</name>
    <dbReference type="NCBI Taxonomy" id="9606"/>
    <lineage>
        <taxon>Eukaryota</taxon>
        <taxon>Metazoa</taxon>
        <taxon>Chordata</taxon>
        <taxon>Craniata</taxon>
        <taxon>Vertebrata</taxon>
        <taxon>Euteleostomi</taxon>
        <taxon>Mammalia</taxon>
        <taxon>Eutheria</taxon>
        <taxon>Euarchontoglires</taxon>
        <taxon>Primates</taxon>
        <taxon>Haplorrhini</taxon>
        <taxon>Catarrhini</taxon>
        <taxon>Hominidae</taxon>
        <taxon>Homo</taxon>
    </lineage>
</organism>
<protein>
    <recommendedName>
        <fullName evidence="3">Coiled-coil domain-containing 92B</fullName>
    </recommendedName>
</protein>
<gene>
    <name evidence="4" type="primary">CCDC92B</name>
</gene>
<proteinExistence type="evidence at protein level"/>
<name>CC92B_HUMAN</name>
<sequence length="255" mass="28665">MDTVSLEHQIQSVQRHISFLKKEQMALLRDLHLEILRLQKRCSELTHDLEMREAQSHQQEAASRELESKCRALESQLEARAAANAELRREVAQREALVSALRCSLRTEERRFLEELRRRSHRATVLGTELQKHTEAAAYLSCQLHAARQRLQAPRPGPGATAEPRPRRRALRARRPPAAHEAAAKGPGRDWAAWDRGAGALDDADPMPDPALFLYARRPLRPSARSPRQPPPQEPPDRAGPQPAPSQPSAPGDPE</sequence>
<dbReference type="EMBL" id="AC005696">
    <property type="status" value="NOT_ANNOTATED_CDS"/>
    <property type="molecule type" value="Genomic_DNA"/>
</dbReference>
<dbReference type="CCDS" id="CCDS92222.1"/>
<dbReference type="RefSeq" id="NP_001342502.1">
    <property type="nucleotide sequence ID" value="NM_001355573.2"/>
</dbReference>
<dbReference type="SMR" id="A0A8I5KY20"/>
<dbReference type="PeptideAtlas" id="A0A8I5KY20"/>
<dbReference type="Ensembl" id="ENST00000614400.2">
    <property type="protein sequence ID" value="ENSP00000509343.1"/>
    <property type="gene ID" value="ENSG00000277200.2"/>
</dbReference>
<dbReference type="GeneID" id="101928991"/>
<dbReference type="MANE-Select" id="ENST00000614400.2">
    <property type="protein sequence ID" value="ENSP00000509343.1"/>
    <property type="RefSeq nucleotide sequence ID" value="NM_001355573.2"/>
    <property type="RefSeq protein sequence ID" value="NP_001342502.1"/>
</dbReference>
<dbReference type="AGR" id="HGNC:52279"/>
<dbReference type="GeneCards" id="CCDC92B"/>
<dbReference type="HGNC" id="HGNC:52279">
    <property type="gene designation" value="CCDC92B"/>
</dbReference>
<dbReference type="OpenTargets" id="ENSG00000277200"/>
<dbReference type="GeneTree" id="ENSGT00430000031027"/>
<dbReference type="PRO" id="PR:A0A8I5KY20"/>
<dbReference type="Proteomes" id="UP000005640">
    <property type="component" value="Chromosome 17"/>
</dbReference>
<dbReference type="InterPro" id="IPR040370">
    <property type="entry name" value="CCDC74A/CCDC74B/CCDC92"/>
</dbReference>
<dbReference type="InterPro" id="IPR039496">
    <property type="entry name" value="CCDC92/74_N"/>
</dbReference>
<dbReference type="PANTHER" id="PTHR14882:SF3">
    <property type="entry name" value="COILED-COIL DOMAIN CONTAINING 92B"/>
    <property type="match status" value="1"/>
</dbReference>
<dbReference type="PANTHER" id="PTHR14882">
    <property type="entry name" value="COILED-COIL DOMAIN-CONTAINING 74A"/>
    <property type="match status" value="1"/>
</dbReference>
<dbReference type="Pfam" id="PF14916">
    <property type="entry name" value="CCDC92"/>
    <property type="match status" value="1"/>
</dbReference>
<feature type="chain" id="PRO_0000458443" description="Coiled-coil domain-containing 92B">
    <location>
        <begin position="1"/>
        <end position="255"/>
    </location>
</feature>
<feature type="region of interest" description="Disordered" evidence="2">
    <location>
        <begin position="149"/>
        <end position="255"/>
    </location>
</feature>
<feature type="coiled-coil region" evidence="1">
    <location>
        <begin position="28"/>
        <end position="90"/>
    </location>
</feature>
<feature type="compositionally biased region" description="Basic residues" evidence="2">
    <location>
        <begin position="166"/>
        <end position="177"/>
    </location>
</feature>
<feature type="compositionally biased region" description="Pro residues" evidence="2">
    <location>
        <begin position="242"/>
        <end position="255"/>
    </location>
</feature>
<keyword id="KW-0175">Coiled coil</keyword>
<keyword id="KW-1267">Proteomics identification</keyword>
<keyword id="KW-1185">Reference proteome</keyword>
<accession>A0A8I5KY20</accession>